<dbReference type="EC" id="2.5.1.39" evidence="1"/>
<dbReference type="EMBL" id="AE005674">
    <property type="protein sequence ID" value="AAN45587.1"/>
    <property type="molecule type" value="Genomic_DNA"/>
</dbReference>
<dbReference type="EMBL" id="AE014073">
    <property type="protein sequence ID" value="AAP18612.1"/>
    <property type="molecule type" value="Genomic_DNA"/>
</dbReference>
<dbReference type="RefSeq" id="NP_709880.1">
    <property type="nucleotide sequence ID" value="NC_004337.2"/>
</dbReference>
<dbReference type="RefSeq" id="WP_000455241.1">
    <property type="nucleotide sequence ID" value="NZ_WPGW01000150.1"/>
</dbReference>
<dbReference type="SMR" id="Q83IP7"/>
<dbReference type="STRING" id="198214.SF4165"/>
<dbReference type="PaxDb" id="198214-SF4165"/>
<dbReference type="GeneID" id="1025859"/>
<dbReference type="KEGG" id="sfl:SF4165"/>
<dbReference type="KEGG" id="sfx:S3566"/>
<dbReference type="PATRIC" id="fig|198214.7.peg.4913"/>
<dbReference type="HOGENOM" id="CLU_034879_1_0_6"/>
<dbReference type="UniPathway" id="UPA00232"/>
<dbReference type="Proteomes" id="UP000001006">
    <property type="component" value="Chromosome"/>
</dbReference>
<dbReference type="Proteomes" id="UP000002673">
    <property type="component" value="Chromosome"/>
</dbReference>
<dbReference type="GO" id="GO:0005886">
    <property type="term" value="C:plasma membrane"/>
    <property type="evidence" value="ECO:0007669"/>
    <property type="project" value="UniProtKB-SubCell"/>
</dbReference>
<dbReference type="GO" id="GO:0008412">
    <property type="term" value="F:4-hydroxybenzoate polyprenyltransferase activity"/>
    <property type="evidence" value="ECO:0007669"/>
    <property type="project" value="UniProtKB-UniRule"/>
</dbReference>
<dbReference type="GO" id="GO:0006744">
    <property type="term" value="P:ubiquinone biosynthetic process"/>
    <property type="evidence" value="ECO:0007669"/>
    <property type="project" value="UniProtKB-UniRule"/>
</dbReference>
<dbReference type="CDD" id="cd13959">
    <property type="entry name" value="PT_UbiA_COQ2"/>
    <property type="match status" value="1"/>
</dbReference>
<dbReference type="FunFam" id="1.10.357.140:FF:000002">
    <property type="entry name" value="4-hydroxybenzoate octaprenyltransferase"/>
    <property type="match status" value="1"/>
</dbReference>
<dbReference type="FunFam" id="1.20.120.1780:FF:000001">
    <property type="entry name" value="4-hydroxybenzoate octaprenyltransferase"/>
    <property type="match status" value="1"/>
</dbReference>
<dbReference type="Gene3D" id="1.10.357.140">
    <property type="entry name" value="UbiA prenyltransferase"/>
    <property type="match status" value="1"/>
</dbReference>
<dbReference type="Gene3D" id="1.20.120.1780">
    <property type="entry name" value="UbiA prenyltransferase"/>
    <property type="match status" value="1"/>
</dbReference>
<dbReference type="HAMAP" id="MF_01635">
    <property type="entry name" value="UbiA"/>
    <property type="match status" value="1"/>
</dbReference>
<dbReference type="InterPro" id="IPR006370">
    <property type="entry name" value="HB_polyprenyltransferase-like"/>
</dbReference>
<dbReference type="InterPro" id="IPR039653">
    <property type="entry name" value="Prenyltransferase"/>
</dbReference>
<dbReference type="InterPro" id="IPR000537">
    <property type="entry name" value="UbiA_prenyltransferase"/>
</dbReference>
<dbReference type="InterPro" id="IPR030470">
    <property type="entry name" value="UbiA_prenylTrfase_CS"/>
</dbReference>
<dbReference type="InterPro" id="IPR044878">
    <property type="entry name" value="UbiA_sf"/>
</dbReference>
<dbReference type="NCBIfam" id="TIGR01474">
    <property type="entry name" value="ubiA_proteo"/>
    <property type="match status" value="1"/>
</dbReference>
<dbReference type="PANTHER" id="PTHR11048:SF28">
    <property type="entry name" value="4-HYDROXYBENZOATE POLYPRENYLTRANSFERASE, MITOCHONDRIAL"/>
    <property type="match status" value="1"/>
</dbReference>
<dbReference type="PANTHER" id="PTHR11048">
    <property type="entry name" value="PRENYLTRANSFERASES"/>
    <property type="match status" value="1"/>
</dbReference>
<dbReference type="Pfam" id="PF01040">
    <property type="entry name" value="UbiA"/>
    <property type="match status" value="1"/>
</dbReference>
<dbReference type="PROSITE" id="PS00943">
    <property type="entry name" value="UBIA"/>
    <property type="match status" value="1"/>
</dbReference>
<proteinExistence type="inferred from homology"/>
<organism>
    <name type="scientific">Shigella flexneri</name>
    <dbReference type="NCBI Taxonomy" id="623"/>
    <lineage>
        <taxon>Bacteria</taxon>
        <taxon>Pseudomonadati</taxon>
        <taxon>Pseudomonadota</taxon>
        <taxon>Gammaproteobacteria</taxon>
        <taxon>Enterobacterales</taxon>
        <taxon>Enterobacteriaceae</taxon>
        <taxon>Shigella</taxon>
    </lineage>
</organism>
<reference key="1">
    <citation type="journal article" date="2002" name="Nucleic Acids Res.">
        <title>Genome sequence of Shigella flexneri 2a: insights into pathogenicity through comparison with genomes of Escherichia coli K12 and O157.</title>
        <authorList>
            <person name="Jin Q."/>
            <person name="Yuan Z."/>
            <person name="Xu J."/>
            <person name="Wang Y."/>
            <person name="Shen Y."/>
            <person name="Lu W."/>
            <person name="Wang J."/>
            <person name="Liu H."/>
            <person name="Yang J."/>
            <person name="Yang F."/>
            <person name="Zhang X."/>
            <person name="Zhang J."/>
            <person name="Yang G."/>
            <person name="Wu H."/>
            <person name="Qu D."/>
            <person name="Dong J."/>
            <person name="Sun L."/>
            <person name="Xue Y."/>
            <person name="Zhao A."/>
            <person name="Gao Y."/>
            <person name="Zhu J."/>
            <person name="Kan B."/>
            <person name="Ding K."/>
            <person name="Chen S."/>
            <person name="Cheng H."/>
            <person name="Yao Z."/>
            <person name="He B."/>
            <person name="Chen R."/>
            <person name="Ma D."/>
            <person name="Qiang B."/>
            <person name="Wen Y."/>
            <person name="Hou Y."/>
            <person name="Yu J."/>
        </authorList>
    </citation>
    <scope>NUCLEOTIDE SEQUENCE [LARGE SCALE GENOMIC DNA]</scope>
    <source>
        <strain>301 / Serotype 2a</strain>
    </source>
</reference>
<reference key="2">
    <citation type="journal article" date="2003" name="Infect. Immun.">
        <title>Complete genome sequence and comparative genomics of Shigella flexneri serotype 2a strain 2457T.</title>
        <authorList>
            <person name="Wei J."/>
            <person name="Goldberg M.B."/>
            <person name="Burland V."/>
            <person name="Venkatesan M.M."/>
            <person name="Deng W."/>
            <person name="Fournier G."/>
            <person name="Mayhew G.F."/>
            <person name="Plunkett G. III"/>
            <person name="Rose D.J."/>
            <person name="Darling A."/>
            <person name="Mau B."/>
            <person name="Perna N.T."/>
            <person name="Payne S.M."/>
            <person name="Runyen-Janecky L.J."/>
            <person name="Zhou S."/>
            <person name="Schwartz D.C."/>
            <person name="Blattner F.R."/>
        </authorList>
    </citation>
    <scope>NUCLEOTIDE SEQUENCE [LARGE SCALE GENOMIC DNA]</scope>
    <source>
        <strain>ATCC 700930 / 2457T / Serotype 2a</strain>
    </source>
</reference>
<protein>
    <recommendedName>
        <fullName evidence="1">4-hydroxybenzoate octaprenyltransferase</fullName>
        <ecNumber evidence="1">2.5.1.39</ecNumber>
    </recommendedName>
    <alternativeName>
        <fullName evidence="1">4-HB polyprenyltransferase</fullName>
    </alternativeName>
</protein>
<name>UBIA_SHIFL</name>
<evidence type="ECO:0000255" key="1">
    <source>
        <dbReference type="HAMAP-Rule" id="MF_01635"/>
    </source>
</evidence>
<accession>Q83IP7</accession>
<accession>Q7BZM1</accession>
<gene>
    <name evidence="1" type="primary">ubiA</name>
    <name type="ordered locus">SF4165</name>
    <name type="ordered locus">S3566</name>
</gene>
<comment type="function">
    <text evidence="1">Catalyzes the prenylation of para-hydroxybenzoate (PHB) with an all-trans polyprenyl group. Mediates the second step in the final reaction sequence of ubiquinone-8 (UQ-8) biosynthesis, which is the condensation of the polyisoprenoid side chain with PHB, generating the first membrane-bound Q intermediate 3-octaprenyl-4-hydroxybenzoate.</text>
</comment>
<comment type="catalytic activity">
    <reaction evidence="1">
        <text>all-trans-octaprenyl diphosphate + 4-hydroxybenzoate = 4-hydroxy-3-(all-trans-octaprenyl)benzoate + diphosphate</text>
        <dbReference type="Rhea" id="RHEA:27782"/>
        <dbReference type="ChEBI" id="CHEBI:1617"/>
        <dbReference type="ChEBI" id="CHEBI:17879"/>
        <dbReference type="ChEBI" id="CHEBI:33019"/>
        <dbReference type="ChEBI" id="CHEBI:57711"/>
        <dbReference type="EC" id="2.5.1.39"/>
    </reaction>
</comment>
<comment type="cofactor">
    <cofactor evidence="1">
        <name>Mg(2+)</name>
        <dbReference type="ChEBI" id="CHEBI:18420"/>
    </cofactor>
</comment>
<comment type="pathway">
    <text evidence="1">Cofactor biosynthesis; ubiquinone biosynthesis.</text>
</comment>
<comment type="subcellular location">
    <subcellularLocation>
        <location evidence="1">Cell inner membrane</location>
        <topology evidence="1">Multi-pass membrane protein</topology>
    </subcellularLocation>
</comment>
<comment type="similarity">
    <text evidence="1">Belongs to the UbiA prenyltransferase family.</text>
</comment>
<sequence length="290" mass="32516">MEWSLTQNKLLAFHRLMRTDKPIGALLLLWPTLWALWVATPGVPQLWIMAVFVAGVWLMRAAGCVVNDYADRKFDGHVKRTANRPLPSGAVTEKEARALFVVLVLISFLLVLTLNTMTILLSIAALALAWVYPFMKRYTHLPQVVLGAAFGWSIPMAFAAVSESVPLSCWLMFLANILWAVAYDTQYAMVDRDDDVKIGIKSTAILFGQYDKLIIGILQIGVLALMAIIGELNGLGWGYYWSIVVAGALFVYQQKLIANREREACFKAFMNNNYVGLVLFLGLAMSYWHF</sequence>
<keyword id="KW-0997">Cell inner membrane</keyword>
<keyword id="KW-1003">Cell membrane</keyword>
<keyword id="KW-0460">Magnesium</keyword>
<keyword id="KW-0472">Membrane</keyword>
<keyword id="KW-1185">Reference proteome</keyword>
<keyword id="KW-0808">Transferase</keyword>
<keyword id="KW-0812">Transmembrane</keyword>
<keyword id="KW-1133">Transmembrane helix</keyword>
<keyword id="KW-0831">Ubiquinone biosynthesis</keyword>
<feature type="chain" id="PRO_0000262844" description="4-hydroxybenzoate octaprenyltransferase">
    <location>
        <begin position="1"/>
        <end position="290"/>
    </location>
</feature>
<feature type="transmembrane region" description="Helical" evidence="1">
    <location>
        <begin position="23"/>
        <end position="43"/>
    </location>
</feature>
<feature type="transmembrane region" description="Helical" evidence="1">
    <location>
        <begin position="46"/>
        <end position="66"/>
    </location>
</feature>
<feature type="transmembrane region" description="Helical" evidence="1">
    <location>
        <begin position="99"/>
        <end position="119"/>
    </location>
</feature>
<feature type="transmembrane region" description="Helical" evidence="1">
    <location>
        <begin position="141"/>
        <end position="161"/>
    </location>
</feature>
<feature type="transmembrane region" description="Helical" evidence="1">
    <location>
        <begin position="163"/>
        <end position="183"/>
    </location>
</feature>
<feature type="transmembrane region" description="Helical" evidence="1">
    <location>
        <begin position="213"/>
        <end position="233"/>
    </location>
</feature>
<feature type="transmembrane region" description="Helical" evidence="1">
    <location>
        <begin position="234"/>
        <end position="254"/>
    </location>
</feature>
<feature type="transmembrane region" description="Helical" evidence="1">
    <location>
        <begin position="268"/>
        <end position="288"/>
    </location>
</feature>